<dbReference type="EMBL" id="AE014134">
    <property type="protein sequence ID" value="AAF51533.1"/>
    <property type="molecule type" value="Genomic_DNA"/>
</dbReference>
<dbReference type="EMBL" id="AY060877">
    <property type="protein sequence ID" value="AAL28425.1"/>
    <property type="molecule type" value="mRNA"/>
</dbReference>
<dbReference type="EMBL" id="AY113438">
    <property type="protein sequence ID" value="AAM29443.1"/>
    <property type="molecule type" value="mRNA"/>
</dbReference>
<dbReference type="RefSeq" id="NP_523440.1">
    <property type="nucleotide sequence ID" value="NM_078716.3"/>
</dbReference>
<dbReference type="SMR" id="Q9VPL3"/>
<dbReference type="FunCoup" id="Q9VPL3">
    <property type="interactions" value="777"/>
</dbReference>
<dbReference type="IntAct" id="Q9VPL3">
    <property type="interactions" value="85"/>
</dbReference>
<dbReference type="STRING" id="7227.FBpp0077783"/>
<dbReference type="PaxDb" id="7227-FBpp0077783"/>
<dbReference type="DNASU" id="33182"/>
<dbReference type="EnsemblMetazoa" id="FBtr0078124">
    <property type="protein sequence ID" value="FBpp0077783"/>
    <property type="gene ID" value="FBgn0031231"/>
</dbReference>
<dbReference type="GeneID" id="33182"/>
<dbReference type="KEGG" id="dme:Dmel_CG11488"/>
<dbReference type="AGR" id="FB:FBgn0031231"/>
<dbReference type="CTD" id="124995"/>
<dbReference type="FlyBase" id="FBgn0031231">
    <property type="gene designation" value="mRpL10"/>
</dbReference>
<dbReference type="VEuPathDB" id="VectorBase:FBgn0031231"/>
<dbReference type="eggNOG" id="KOG4241">
    <property type="taxonomic scope" value="Eukaryota"/>
</dbReference>
<dbReference type="HOGENOM" id="CLU_073093_1_0_1"/>
<dbReference type="InParanoid" id="Q9VPL3"/>
<dbReference type="OMA" id="RENRMIA"/>
<dbReference type="OrthoDB" id="360689at2759"/>
<dbReference type="PhylomeDB" id="Q9VPL3"/>
<dbReference type="Reactome" id="R-DME-5389840">
    <property type="pathway name" value="Mitochondrial translation elongation"/>
</dbReference>
<dbReference type="Reactome" id="R-DME-5419276">
    <property type="pathway name" value="Mitochondrial translation termination"/>
</dbReference>
<dbReference type="BioGRID-ORCS" id="33182">
    <property type="hits" value="0 hits in 1 CRISPR screen"/>
</dbReference>
<dbReference type="GenomeRNAi" id="33182"/>
<dbReference type="PRO" id="PR:Q9VPL3"/>
<dbReference type="Proteomes" id="UP000000803">
    <property type="component" value="Chromosome 2L"/>
</dbReference>
<dbReference type="Bgee" id="FBgn0031231">
    <property type="expression patterns" value="Expressed in medullary intrinsic neuron Mi1 (Drosophila) in brain and 95 other cell types or tissues"/>
</dbReference>
<dbReference type="GO" id="GO:0005762">
    <property type="term" value="C:mitochondrial large ribosomal subunit"/>
    <property type="evidence" value="ECO:0000250"/>
    <property type="project" value="UniProtKB"/>
</dbReference>
<dbReference type="GO" id="GO:1990904">
    <property type="term" value="C:ribonucleoprotein complex"/>
    <property type="evidence" value="ECO:0000250"/>
    <property type="project" value="UniProtKB"/>
</dbReference>
<dbReference type="GO" id="GO:0003735">
    <property type="term" value="F:structural constituent of ribosome"/>
    <property type="evidence" value="ECO:0000250"/>
    <property type="project" value="UniProtKB"/>
</dbReference>
<dbReference type="GO" id="GO:0032543">
    <property type="term" value="P:mitochondrial translation"/>
    <property type="evidence" value="ECO:0000304"/>
    <property type="project" value="FlyBase"/>
</dbReference>
<dbReference type="GO" id="GO:0006412">
    <property type="term" value="P:translation"/>
    <property type="evidence" value="ECO:0000250"/>
    <property type="project" value="UniProtKB"/>
</dbReference>
<dbReference type="CDD" id="cd05797">
    <property type="entry name" value="Ribosomal_L10"/>
    <property type="match status" value="1"/>
</dbReference>
<dbReference type="FunFam" id="3.30.70.1730:FF:000012">
    <property type="entry name" value="Mitochondrial Ribosomal Protein, Large"/>
    <property type="match status" value="1"/>
</dbReference>
<dbReference type="Gene3D" id="3.30.70.1730">
    <property type="match status" value="1"/>
</dbReference>
<dbReference type="InterPro" id="IPR001790">
    <property type="entry name" value="Ribosomal_uL10"/>
</dbReference>
<dbReference type="InterPro" id="IPR043141">
    <property type="entry name" value="Ribosomal_uL10-like_sf"/>
</dbReference>
<dbReference type="InterPro" id="IPR047865">
    <property type="entry name" value="Ribosomal_uL10_bac_type"/>
</dbReference>
<dbReference type="PANTHER" id="PTHR11560">
    <property type="entry name" value="39S RIBOSOMAL PROTEIN L10, MITOCHONDRIAL"/>
    <property type="match status" value="1"/>
</dbReference>
<dbReference type="Pfam" id="PF00466">
    <property type="entry name" value="Ribosomal_L10"/>
    <property type="match status" value="1"/>
</dbReference>
<dbReference type="SUPFAM" id="SSF160369">
    <property type="entry name" value="Ribosomal protein L10-like"/>
    <property type="match status" value="1"/>
</dbReference>
<evidence type="ECO:0000250" key="1">
    <source>
        <dbReference type="UniProtKB" id="Q7Z7H8"/>
    </source>
</evidence>
<evidence type="ECO:0000255" key="2"/>
<evidence type="ECO:0000305" key="3"/>
<protein>
    <recommendedName>
        <fullName evidence="3">Large ribosomal subunit protein uL10m</fullName>
    </recommendedName>
    <alternativeName>
        <fullName>39S ribosomal protein L10, mitochondrial</fullName>
        <shortName>L10mt</shortName>
        <shortName>MRP-L10</shortName>
    </alternativeName>
</protein>
<feature type="transit peptide" description="Mitochondrion" evidence="2">
    <location>
        <begin position="1"/>
        <end position="24"/>
    </location>
</feature>
<feature type="chain" id="PRO_0000273079" description="Large ribosomal subunit protein uL10m">
    <location>
        <begin position="25"/>
        <end position="248"/>
    </location>
</feature>
<accession>Q9VPL3</accession>
<comment type="subunit">
    <text evidence="1">Component of the mitochondrial ribosome large subunit (39S) which comprises a 16S rRNA and about 50 distinct proteins.</text>
</comment>
<comment type="subcellular location">
    <subcellularLocation>
        <location evidence="1">Mitochondrion</location>
    </subcellularLocation>
</comment>
<comment type="similarity">
    <text evidence="3">Belongs to the universal ribosomal protein uL10 family.</text>
</comment>
<sequence length="248" mass="28337">MATLIQRSLSLAKSSTPALQFLRFRGKINIQRPKAPHYERARVVAVTQPKYPELPKAKSCFKTRAERTQQQQENPYNEIIAREVRNWLDHSRLVAFFHLSSITADDIFRVRVQLHKQNLHLKSYGSKIIEQAVKNTRYEAIVPLFHSNHCIVFSPDPEKTAALLRIVRRVPQMVLLGGIVEETMLSRNQLVAYAQMPGLHAVQAQLVQTLSQAPGHLIQQLQAHQNSFVQVLDVHAKNQMNEETPKST</sequence>
<organism>
    <name type="scientific">Drosophila melanogaster</name>
    <name type="common">Fruit fly</name>
    <dbReference type="NCBI Taxonomy" id="7227"/>
    <lineage>
        <taxon>Eukaryota</taxon>
        <taxon>Metazoa</taxon>
        <taxon>Ecdysozoa</taxon>
        <taxon>Arthropoda</taxon>
        <taxon>Hexapoda</taxon>
        <taxon>Insecta</taxon>
        <taxon>Pterygota</taxon>
        <taxon>Neoptera</taxon>
        <taxon>Endopterygota</taxon>
        <taxon>Diptera</taxon>
        <taxon>Brachycera</taxon>
        <taxon>Muscomorpha</taxon>
        <taxon>Ephydroidea</taxon>
        <taxon>Drosophilidae</taxon>
        <taxon>Drosophila</taxon>
        <taxon>Sophophora</taxon>
    </lineage>
</organism>
<proteinExistence type="evidence at transcript level"/>
<reference key="1">
    <citation type="journal article" date="2000" name="Science">
        <title>The genome sequence of Drosophila melanogaster.</title>
        <authorList>
            <person name="Adams M.D."/>
            <person name="Celniker S.E."/>
            <person name="Holt R.A."/>
            <person name="Evans C.A."/>
            <person name="Gocayne J.D."/>
            <person name="Amanatides P.G."/>
            <person name="Scherer S.E."/>
            <person name="Li P.W."/>
            <person name="Hoskins R.A."/>
            <person name="Galle R.F."/>
            <person name="George R.A."/>
            <person name="Lewis S.E."/>
            <person name="Richards S."/>
            <person name="Ashburner M."/>
            <person name="Henderson S.N."/>
            <person name="Sutton G.G."/>
            <person name="Wortman J.R."/>
            <person name="Yandell M.D."/>
            <person name="Zhang Q."/>
            <person name="Chen L.X."/>
            <person name="Brandon R.C."/>
            <person name="Rogers Y.-H.C."/>
            <person name="Blazej R.G."/>
            <person name="Champe M."/>
            <person name="Pfeiffer B.D."/>
            <person name="Wan K.H."/>
            <person name="Doyle C."/>
            <person name="Baxter E.G."/>
            <person name="Helt G."/>
            <person name="Nelson C.R."/>
            <person name="Miklos G.L.G."/>
            <person name="Abril J.F."/>
            <person name="Agbayani A."/>
            <person name="An H.-J."/>
            <person name="Andrews-Pfannkoch C."/>
            <person name="Baldwin D."/>
            <person name="Ballew R.M."/>
            <person name="Basu A."/>
            <person name="Baxendale J."/>
            <person name="Bayraktaroglu L."/>
            <person name="Beasley E.M."/>
            <person name="Beeson K.Y."/>
            <person name="Benos P.V."/>
            <person name="Berman B.P."/>
            <person name="Bhandari D."/>
            <person name="Bolshakov S."/>
            <person name="Borkova D."/>
            <person name="Botchan M.R."/>
            <person name="Bouck J."/>
            <person name="Brokstein P."/>
            <person name="Brottier P."/>
            <person name="Burtis K.C."/>
            <person name="Busam D.A."/>
            <person name="Butler H."/>
            <person name="Cadieu E."/>
            <person name="Center A."/>
            <person name="Chandra I."/>
            <person name="Cherry J.M."/>
            <person name="Cawley S."/>
            <person name="Dahlke C."/>
            <person name="Davenport L.B."/>
            <person name="Davies P."/>
            <person name="de Pablos B."/>
            <person name="Delcher A."/>
            <person name="Deng Z."/>
            <person name="Mays A.D."/>
            <person name="Dew I."/>
            <person name="Dietz S.M."/>
            <person name="Dodson K."/>
            <person name="Doup L.E."/>
            <person name="Downes M."/>
            <person name="Dugan-Rocha S."/>
            <person name="Dunkov B.C."/>
            <person name="Dunn P."/>
            <person name="Durbin K.J."/>
            <person name="Evangelista C.C."/>
            <person name="Ferraz C."/>
            <person name="Ferriera S."/>
            <person name="Fleischmann W."/>
            <person name="Fosler C."/>
            <person name="Gabrielian A.E."/>
            <person name="Garg N.S."/>
            <person name="Gelbart W.M."/>
            <person name="Glasser K."/>
            <person name="Glodek A."/>
            <person name="Gong F."/>
            <person name="Gorrell J.H."/>
            <person name="Gu Z."/>
            <person name="Guan P."/>
            <person name="Harris M."/>
            <person name="Harris N.L."/>
            <person name="Harvey D.A."/>
            <person name="Heiman T.J."/>
            <person name="Hernandez J.R."/>
            <person name="Houck J."/>
            <person name="Hostin D."/>
            <person name="Houston K.A."/>
            <person name="Howland T.J."/>
            <person name="Wei M.-H."/>
            <person name="Ibegwam C."/>
            <person name="Jalali M."/>
            <person name="Kalush F."/>
            <person name="Karpen G.H."/>
            <person name="Ke Z."/>
            <person name="Kennison J.A."/>
            <person name="Ketchum K.A."/>
            <person name="Kimmel B.E."/>
            <person name="Kodira C.D."/>
            <person name="Kraft C.L."/>
            <person name="Kravitz S."/>
            <person name="Kulp D."/>
            <person name="Lai Z."/>
            <person name="Lasko P."/>
            <person name="Lei Y."/>
            <person name="Levitsky A.A."/>
            <person name="Li J.H."/>
            <person name="Li Z."/>
            <person name="Liang Y."/>
            <person name="Lin X."/>
            <person name="Liu X."/>
            <person name="Mattei B."/>
            <person name="McIntosh T.C."/>
            <person name="McLeod M.P."/>
            <person name="McPherson D."/>
            <person name="Merkulov G."/>
            <person name="Milshina N.V."/>
            <person name="Mobarry C."/>
            <person name="Morris J."/>
            <person name="Moshrefi A."/>
            <person name="Mount S.M."/>
            <person name="Moy M."/>
            <person name="Murphy B."/>
            <person name="Murphy L."/>
            <person name="Muzny D.M."/>
            <person name="Nelson D.L."/>
            <person name="Nelson D.R."/>
            <person name="Nelson K.A."/>
            <person name="Nixon K."/>
            <person name="Nusskern D.R."/>
            <person name="Pacleb J.M."/>
            <person name="Palazzolo M."/>
            <person name="Pittman G.S."/>
            <person name="Pan S."/>
            <person name="Pollard J."/>
            <person name="Puri V."/>
            <person name="Reese M.G."/>
            <person name="Reinert K."/>
            <person name="Remington K."/>
            <person name="Saunders R.D.C."/>
            <person name="Scheeler F."/>
            <person name="Shen H."/>
            <person name="Shue B.C."/>
            <person name="Siden-Kiamos I."/>
            <person name="Simpson M."/>
            <person name="Skupski M.P."/>
            <person name="Smith T.J."/>
            <person name="Spier E."/>
            <person name="Spradling A.C."/>
            <person name="Stapleton M."/>
            <person name="Strong R."/>
            <person name="Sun E."/>
            <person name="Svirskas R."/>
            <person name="Tector C."/>
            <person name="Turner R."/>
            <person name="Venter E."/>
            <person name="Wang A.H."/>
            <person name="Wang X."/>
            <person name="Wang Z.-Y."/>
            <person name="Wassarman D.A."/>
            <person name="Weinstock G.M."/>
            <person name="Weissenbach J."/>
            <person name="Williams S.M."/>
            <person name="Woodage T."/>
            <person name="Worley K.C."/>
            <person name="Wu D."/>
            <person name="Yang S."/>
            <person name="Yao Q.A."/>
            <person name="Ye J."/>
            <person name="Yeh R.-F."/>
            <person name="Zaveri J.S."/>
            <person name="Zhan M."/>
            <person name="Zhang G."/>
            <person name="Zhao Q."/>
            <person name="Zheng L."/>
            <person name="Zheng X.H."/>
            <person name="Zhong F.N."/>
            <person name="Zhong W."/>
            <person name="Zhou X."/>
            <person name="Zhu S.C."/>
            <person name="Zhu X."/>
            <person name="Smith H.O."/>
            <person name="Gibbs R.A."/>
            <person name="Myers E.W."/>
            <person name="Rubin G.M."/>
            <person name="Venter J.C."/>
        </authorList>
    </citation>
    <scope>NUCLEOTIDE SEQUENCE [LARGE SCALE GENOMIC DNA]</scope>
    <source>
        <strain>Berkeley</strain>
    </source>
</reference>
<reference key="2">
    <citation type="journal article" date="2002" name="Genome Biol.">
        <title>Annotation of the Drosophila melanogaster euchromatic genome: a systematic review.</title>
        <authorList>
            <person name="Misra S."/>
            <person name="Crosby M.A."/>
            <person name="Mungall C.J."/>
            <person name="Matthews B.B."/>
            <person name="Campbell K.S."/>
            <person name="Hradecky P."/>
            <person name="Huang Y."/>
            <person name="Kaminker J.S."/>
            <person name="Millburn G.H."/>
            <person name="Prochnik S.E."/>
            <person name="Smith C.D."/>
            <person name="Tupy J.L."/>
            <person name="Whitfield E.J."/>
            <person name="Bayraktaroglu L."/>
            <person name="Berman B.P."/>
            <person name="Bettencourt B.R."/>
            <person name="Celniker S.E."/>
            <person name="de Grey A.D.N.J."/>
            <person name="Drysdale R.A."/>
            <person name="Harris N.L."/>
            <person name="Richter J."/>
            <person name="Russo S."/>
            <person name="Schroeder A.J."/>
            <person name="Shu S.Q."/>
            <person name="Stapleton M."/>
            <person name="Yamada C."/>
            <person name="Ashburner M."/>
            <person name="Gelbart W.M."/>
            <person name="Rubin G.M."/>
            <person name="Lewis S.E."/>
        </authorList>
    </citation>
    <scope>GENOME REANNOTATION</scope>
    <source>
        <strain>Berkeley</strain>
    </source>
</reference>
<reference key="3">
    <citation type="journal article" date="2002" name="Genome Biol.">
        <title>A Drosophila full-length cDNA resource.</title>
        <authorList>
            <person name="Stapleton M."/>
            <person name="Carlson J.W."/>
            <person name="Brokstein P."/>
            <person name="Yu C."/>
            <person name="Champe M."/>
            <person name="George R.A."/>
            <person name="Guarin H."/>
            <person name="Kronmiller B."/>
            <person name="Pacleb J.M."/>
            <person name="Park S."/>
            <person name="Wan K.H."/>
            <person name="Rubin G.M."/>
            <person name="Celniker S.E."/>
        </authorList>
    </citation>
    <scope>NUCLEOTIDE SEQUENCE [LARGE SCALE MRNA]</scope>
    <source>
        <strain>Berkeley</strain>
        <tissue>Embryo</tissue>
        <tissue>Ovary</tissue>
    </source>
</reference>
<name>RM10_DROME</name>
<keyword id="KW-0496">Mitochondrion</keyword>
<keyword id="KW-1185">Reference proteome</keyword>
<keyword id="KW-0687">Ribonucleoprotein</keyword>
<keyword id="KW-0689">Ribosomal protein</keyword>
<keyword id="KW-0809">Transit peptide</keyword>
<gene>
    <name type="primary">mRpL10</name>
    <name type="ORF">CG11488</name>
</gene>